<comment type="catalytic activity">
    <reaction evidence="1">
        <text>tRNA(Arg) + L-arginine + ATP = L-arginyl-tRNA(Arg) + AMP + diphosphate</text>
        <dbReference type="Rhea" id="RHEA:20301"/>
        <dbReference type="Rhea" id="RHEA-COMP:9658"/>
        <dbReference type="Rhea" id="RHEA-COMP:9673"/>
        <dbReference type="ChEBI" id="CHEBI:30616"/>
        <dbReference type="ChEBI" id="CHEBI:32682"/>
        <dbReference type="ChEBI" id="CHEBI:33019"/>
        <dbReference type="ChEBI" id="CHEBI:78442"/>
        <dbReference type="ChEBI" id="CHEBI:78513"/>
        <dbReference type="ChEBI" id="CHEBI:456215"/>
        <dbReference type="EC" id="6.1.1.19"/>
    </reaction>
</comment>
<comment type="subunit">
    <text evidence="1">Monomer.</text>
</comment>
<comment type="subcellular location">
    <subcellularLocation>
        <location evidence="1">Cytoplasm</location>
    </subcellularLocation>
</comment>
<comment type="similarity">
    <text evidence="1">Belongs to the class-I aminoacyl-tRNA synthetase family.</text>
</comment>
<reference key="1">
    <citation type="submission" date="2007-07" db="EMBL/GenBank/DDBJ databases">
        <title>Complete sequence of chromosome of Shewanella baltica OS185.</title>
        <authorList>
            <consortium name="US DOE Joint Genome Institute"/>
            <person name="Copeland A."/>
            <person name="Lucas S."/>
            <person name="Lapidus A."/>
            <person name="Barry K."/>
            <person name="Glavina del Rio T."/>
            <person name="Dalin E."/>
            <person name="Tice H."/>
            <person name="Pitluck S."/>
            <person name="Sims D."/>
            <person name="Brettin T."/>
            <person name="Bruce D."/>
            <person name="Detter J.C."/>
            <person name="Han C."/>
            <person name="Schmutz J."/>
            <person name="Larimer F."/>
            <person name="Land M."/>
            <person name="Hauser L."/>
            <person name="Kyrpides N."/>
            <person name="Mikhailova N."/>
            <person name="Brettar I."/>
            <person name="Rodrigues J."/>
            <person name="Konstantinidis K."/>
            <person name="Tiedje J."/>
            <person name="Richardson P."/>
        </authorList>
    </citation>
    <scope>NUCLEOTIDE SEQUENCE [LARGE SCALE GENOMIC DNA]</scope>
    <source>
        <strain>OS185</strain>
    </source>
</reference>
<feature type="chain" id="PRO_1000018113" description="Arginine--tRNA ligase">
    <location>
        <begin position="1"/>
        <end position="581"/>
    </location>
</feature>
<feature type="short sequence motif" description="'HIGH' region">
    <location>
        <begin position="126"/>
        <end position="136"/>
    </location>
</feature>
<accession>A6WIK3</accession>
<gene>
    <name evidence="1" type="primary">argS</name>
    <name type="ordered locus">Shew185_0474</name>
</gene>
<proteinExistence type="inferred from homology"/>
<name>SYR_SHEB8</name>
<dbReference type="EC" id="6.1.1.19" evidence="1"/>
<dbReference type="EMBL" id="CP000753">
    <property type="protein sequence ID" value="ABS06642.1"/>
    <property type="molecule type" value="Genomic_DNA"/>
</dbReference>
<dbReference type="RefSeq" id="WP_006083280.1">
    <property type="nucleotide sequence ID" value="NC_009665.1"/>
</dbReference>
<dbReference type="SMR" id="A6WIK3"/>
<dbReference type="GeneID" id="11770825"/>
<dbReference type="KEGG" id="sbm:Shew185_0474"/>
<dbReference type="HOGENOM" id="CLU_006406_5_1_6"/>
<dbReference type="GO" id="GO:0005737">
    <property type="term" value="C:cytoplasm"/>
    <property type="evidence" value="ECO:0007669"/>
    <property type="project" value="UniProtKB-SubCell"/>
</dbReference>
<dbReference type="GO" id="GO:0004814">
    <property type="term" value="F:arginine-tRNA ligase activity"/>
    <property type="evidence" value="ECO:0007669"/>
    <property type="project" value="UniProtKB-UniRule"/>
</dbReference>
<dbReference type="GO" id="GO:0005524">
    <property type="term" value="F:ATP binding"/>
    <property type="evidence" value="ECO:0007669"/>
    <property type="project" value="UniProtKB-UniRule"/>
</dbReference>
<dbReference type="GO" id="GO:0006420">
    <property type="term" value="P:arginyl-tRNA aminoacylation"/>
    <property type="evidence" value="ECO:0007669"/>
    <property type="project" value="UniProtKB-UniRule"/>
</dbReference>
<dbReference type="CDD" id="cd07956">
    <property type="entry name" value="Anticodon_Ia_Arg"/>
    <property type="match status" value="1"/>
</dbReference>
<dbReference type="CDD" id="cd00671">
    <property type="entry name" value="ArgRS_core"/>
    <property type="match status" value="1"/>
</dbReference>
<dbReference type="FunFam" id="1.10.730.10:FF:000001">
    <property type="entry name" value="Arginine--tRNA ligase"/>
    <property type="match status" value="1"/>
</dbReference>
<dbReference type="FunFam" id="3.30.1360.70:FF:000003">
    <property type="entry name" value="Arginine--tRNA ligase"/>
    <property type="match status" value="1"/>
</dbReference>
<dbReference type="FunFam" id="3.40.50.620:FF:000030">
    <property type="entry name" value="Arginine--tRNA ligase"/>
    <property type="match status" value="1"/>
</dbReference>
<dbReference type="Gene3D" id="3.30.1360.70">
    <property type="entry name" value="Arginyl tRNA synthetase N-terminal domain"/>
    <property type="match status" value="1"/>
</dbReference>
<dbReference type="Gene3D" id="3.40.50.620">
    <property type="entry name" value="HUPs"/>
    <property type="match status" value="1"/>
</dbReference>
<dbReference type="Gene3D" id="1.10.730.10">
    <property type="entry name" value="Isoleucyl-tRNA Synthetase, Domain 1"/>
    <property type="match status" value="1"/>
</dbReference>
<dbReference type="HAMAP" id="MF_00123">
    <property type="entry name" value="Arg_tRNA_synth"/>
    <property type="match status" value="1"/>
</dbReference>
<dbReference type="InterPro" id="IPR001412">
    <property type="entry name" value="aa-tRNA-synth_I_CS"/>
</dbReference>
<dbReference type="InterPro" id="IPR001278">
    <property type="entry name" value="Arg-tRNA-ligase"/>
</dbReference>
<dbReference type="InterPro" id="IPR005148">
    <property type="entry name" value="Arg-tRNA-synth_N"/>
</dbReference>
<dbReference type="InterPro" id="IPR036695">
    <property type="entry name" value="Arg-tRNA-synth_N_sf"/>
</dbReference>
<dbReference type="InterPro" id="IPR035684">
    <property type="entry name" value="ArgRS_core"/>
</dbReference>
<dbReference type="InterPro" id="IPR008909">
    <property type="entry name" value="DALR_anticod-bd"/>
</dbReference>
<dbReference type="InterPro" id="IPR014729">
    <property type="entry name" value="Rossmann-like_a/b/a_fold"/>
</dbReference>
<dbReference type="InterPro" id="IPR009080">
    <property type="entry name" value="tRNAsynth_Ia_anticodon-bd"/>
</dbReference>
<dbReference type="NCBIfam" id="TIGR00456">
    <property type="entry name" value="argS"/>
    <property type="match status" value="1"/>
</dbReference>
<dbReference type="PANTHER" id="PTHR11956:SF5">
    <property type="entry name" value="ARGININE--TRNA LIGASE, CYTOPLASMIC"/>
    <property type="match status" value="1"/>
</dbReference>
<dbReference type="PANTHER" id="PTHR11956">
    <property type="entry name" value="ARGINYL-TRNA SYNTHETASE"/>
    <property type="match status" value="1"/>
</dbReference>
<dbReference type="Pfam" id="PF03485">
    <property type="entry name" value="Arg_tRNA_synt_N"/>
    <property type="match status" value="1"/>
</dbReference>
<dbReference type="Pfam" id="PF05746">
    <property type="entry name" value="DALR_1"/>
    <property type="match status" value="1"/>
</dbReference>
<dbReference type="Pfam" id="PF00750">
    <property type="entry name" value="tRNA-synt_1d"/>
    <property type="match status" value="1"/>
</dbReference>
<dbReference type="PRINTS" id="PR01038">
    <property type="entry name" value="TRNASYNTHARG"/>
</dbReference>
<dbReference type="SMART" id="SM01016">
    <property type="entry name" value="Arg_tRNA_synt_N"/>
    <property type="match status" value="1"/>
</dbReference>
<dbReference type="SMART" id="SM00836">
    <property type="entry name" value="DALR_1"/>
    <property type="match status" value="1"/>
</dbReference>
<dbReference type="SUPFAM" id="SSF47323">
    <property type="entry name" value="Anticodon-binding domain of a subclass of class I aminoacyl-tRNA synthetases"/>
    <property type="match status" value="1"/>
</dbReference>
<dbReference type="SUPFAM" id="SSF55190">
    <property type="entry name" value="Arginyl-tRNA synthetase (ArgRS), N-terminal 'additional' domain"/>
    <property type="match status" value="1"/>
</dbReference>
<dbReference type="SUPFAM" id="SSF52374">
    <property type="entry name" value="Nucleotidylyl transferase"/>
    <property type="match status" value="1"/>
</dbReference>
<dbReference type="PROSITE" id="PS00178">
    <property type="entry name" value="AA_TRNA_LIGASE_I"/>
    <property type="match status" value="1"/>
</dbReference>
<sequence length="581" mass="64892">MKSHIQSLLEQTLESFKQQGIVPADFEARIQVDRTKDKSHGDLATNLAMMLTKVAGKNPRELAQLIIDTLPASAYVAKVEIAGPGFINFFINDSALADQLQNAVNDEHLGIKLPTPQTVVVDYSSPNLAKEMHVGHLRSTIIGDSVVRALEFLGHKVIRQNHVGDWGTQFGMLLAYMEELRAKNGEKAQLELSDLENFYRAAKLRFDESAEFATRARQLVVELQSGDEYCNKLWREFNDISLSHCHEVYARLGVSLTRADVHGESAYNADLEQVVKDLDAQGLLTESNGAKVVFQEAFRNKEGEPLPVIIQKADGGYLYATSDLAAMRYRSNVLKADRVLYFVDLRQALHFQQVFSLAKLAKFVREDMSLEHLGFGTMNGEDGRPFKTRSGGVVKLVDLLEEANVRALELVRSKNPDMDEVTLTEIARVVGISAVKYADLSKNRTSDYIFSFEQMLSFEGNTAPYLLYAYTRVAGIFKRVTDLDLSQAKIVLEHEKEKDLGNKLAQFGEILSRVVDKGQPHVLCAYLYELAGAFSSFYEACPVLAADNDAQKNSRLLLAQLTARTLQKGLNLLGIETLERM</sequence>
<evidence type="ECO:0000255" key="1">
    <source>
        <dbReference type="HAMAP-Rule" id="MF_00123"/>
    </source>
</evidence>
<protein>
    <recommendedName>
        <fullName evidence="1">Arginine--tRNA ligase</fullName>
        <ecNumber evidence="1">6.1.1.19</ecNumber>
    </recommendedName>
    <alternativeName>
        <fullName evidence="1">Arginyl-tRNA synthetase</fullName>
        <shortName evidence="1">ArgRS</shortName>
    </alternativeName>
</protein>
<organism>
    <name type="scientific">Shewanella baltica (strain OS185)</name>
    <dbReference type="NCBI Taxonomy" id="402882"/>
    <lineage>
        <taxon>Bacteria</taxon>
        <taxon>Pseudomonadati</taxon>
        <taxon>Pseudomonadota</taxon>
        <taxon>Gammaproteobacteria</taxon>
        <taxon>Alteromonadales</taxon>
        <taxon>Shewanellaceae</taxon>
        <taxon>Shewanella</taxon>
    </lineage>
</organism>
<keyword id="KW-0030">Aminoacyl-tRNA synthetase</keyword>
<keyword id="KW-0067">ATP-binding</keyword>
<keyword id="KW-0963">Cytoplasm</keyword>
<keyword id="KW-0436">Ligase</keyword>
<keyword id="KW-0547">Nucleotide-binding</keyword>
<keyword id="KW-0648">Protein biosynthesis</keyword>